<dbReference type="EMBL" id="AP001168">
    <property type="protein sequence ID" value="BAD67730.1"/>
    <property type="molecule type" value="Genomic_DNA"/>
</dbReference>
<dbReference type="EMBL" id="AP008212">
    <property type="protein sequence ID" value="BAH93308.1"/>
    <property type="molecule type" value="Genomic_DNA"/>
</dbReference>
<dbReference type="EMBL" id="AP014962">
    <property type="protein sequence ID" value="BAS95908.1"/>
    <property type="molecule type" value="Genomic_DNA"/>
</dbReference>
<dbReference type="FunCoup" id="Q5VS45">
    <property type="interactions" value="2"/>
</dbReference>
<dbReference type="STRING" id="39947.Q5VS45"/>
<dbReference type="PaxDb" id="39947-Q5VS45"/>
<dbReference type="EnsemblPlants" id="Os06t0125132-00">
    <property type="protein sequence ID" value="Os06t0125132-00"/>
    <property type="gene ID" value="Os06g0125132"/>
</dbReference>
<dbReference type="Gramene" id="Os06t0125132-00">
    <property type="protein sequence ID" value="Os06t0125132-00"/>
    <property type="gene ID" value="Os06g0125132"/>
</dbReference>
<dbReference type="KEGG" id="dosa:Os06g0125132"/>
<dbReference type="eggNOG" id="ENOG502T0JV">
    <property type="taxonomic scope" value="Eukaryota"/>
</dbReference>
<dbReference type="HOGENOM" id="CLU_192481_0_0_1"/>
<dbReference type="InParanoid" id="Q5VS45"/>
<dbReference type="OrthoDB" id="728887at2759"/>
<dbReference type="UniPathway" id="UPA00223"/>
<dbReference type="Proteomes" id="UP000000763">
    <property type="component" value="Chromosome 6"/>
</dbReference>
<dbReference type="Proteomes" id="UP000059680">
    <property type="component" value="Chromosome 6"/>
</dbReference>
<dbReference type="GO" id="GO:0005743">
    <property type="term" value="C:mitochondrial inner membrane"/>
    <property type="evidence" value="ECO:0007669"/>
    <property type="project" value="UniProtKB-SubCell"/>
</dbReference>
<dbReference type="GO" id="GO:0045273">
    <property type="term" value="C:respiratory chain complex II (succinate dehydrogenase)"/>
    <property type="evidence" value="ECO:0000314"/>
    <property type="project" value="UniProtKB"/>
</dbReference>
<dbReference type="GO" id="GO:0006099">
    <property type="term" value="P:tricarboxylic acid cycle"/>
    <property type="evidence" value="ECO:0007669"/>
    <property type="project" value="UniProtKB-UniPathway"/>
</dbReference>
<reference key="1">
    <citation type="journal article" date="2005" name="Nature">
        <title>The map-based sequence of the rice genome.</title>
        <authorList>
            <consortium name="International rice genome sequencing project (IRGSP)"/>
        </authorList>
    </citation>
    <scope>NUCLEOTIDE SEQUENCE [LARGE SCALE GENOMIC DNA]</scope>
    <source>
        <strain>cv. Nipponbare</strain>
    </source>
</reference>
<reference key="2">
    <citation type="journal article" date="2008" name="Nucleic Acids Res.">
        <title>The rice annotation project database (RAP-DB): 2008 update.</title>
        <authorList>
            <consortium name="The rice annotation project (RAP)"/>
        </authorList>
    </citation>
    <scope>GENOME REANNOTATION</scope>
    <source>
        <strain>cv. Nipponbare</strain>
    </source>
</reference>
<reference key="3">
    <citation type="journal article" date="2013" name="Rice">
        <title>Improvement of the Oryza sativa Nipponbare reference genome using next generation sequence and optical map data.</title>
        <authorList>
            <person name="Kawahara Y."/>
            <person name="de la Bastide M."/>
            <person name="Hamilton J.P."/>
            <person name="Kanamori H."/>
            <person name="McCombie W.R."/>
            <person name="Ouyang S."/>
            <person name="Schwartz D.C."/>
            <person name="Tanaka T."/>
            <person name="Wu J."/>
            <person name="Zhou S."/>
            <person name="Childs K.L."/>
            <person name="Davidson R.M."/>
            <person name="Lin H."/>
            <person name="Quesada-Ocampo L."/>
            <person name="Vaillancourt B."/>
            <person name="Sakai H."/>
            <person name="Lee S.S."/>
            <person name="Kim J."/>
            <person name="Numa H."/>
            <person name="Itoh T."/>
            <person name="Buell C.R."/>
            <person name="Matsumoto T."/>
        </authorList>
    </citation>
    <scope>GENOME REANNOTATION</scope>
    <source>
        <strain>cv. Nipponbare</strain>
    </source>
</reference>
<protein>
    <recommendedName>
        <fullName evidence="2">Succinate dehydrogenase subunit 8B, mitochondrial</fullName>
    </recommendedName>
</protein>
<feature type="chain" id="PRO_0000431759" description="Succinate dehydrogenase subunit 8B, mitochondrial">
    <location>
        <begin position="1"/>
        <end position="58"/>
    </location>
</feature>
<gene>
    <name evidence="2" type="primary">SDH8B</name>
    <name evidence="4" type="ordered locus">Os06g0125132</name>
    <name evidence="2" type="ordered locus">LOC_Os06g03514</name>
    <name evidence="3" type="ORF">P0425F02.23</name>
</gene>
<comment type="pathway">
    <text evidence="1">Carbohydrate metabolism; tricarboxylic acid cycle.</text>
</comment>
<comment type="subunit">
    <text evidence="1">Component of complex II composed of eight subunits in plants: four classical SDH subunits SDH1, SDH2, SDH3 and SDH4 (a flavoprotein (FP), an iron-sulfur protein (IP), and a cytochrome b composed of a large and a small subunit.), as well as four subunits unknown in mitochondria from bacteria and heterotrophic eukaryotes.</text>
</comment>
<comment type="subcellular location">
    <subcellularLocation>
        <location evidence="1">Mitochondrion inner membrane</location>
        <topology evidence="1">Peripheral membrane protein</topology>
    </subcellularLocation>
</comment>
<keyword id="KW-0472">Membrane</keyword>
<keyword id="KW-0496">Mitochondrion</keyword>
<keyword id="KW-0999">Mitochondrion inner membrane</keyword>
<keyword id="KW-1185">Reference proteome</keyword>
<keyword id="KW-0816">Tricarboxylic acid cycle</keyword>
<name>SDH8B_ORYSJ</name>
<organism>
    <name type="scientific">Oryza sativa subsp. japonica</name>
    <name type="common">Rice</name>
    <dbReference type="NCBI Taxonomy" id="39947"/>
    <lineage>
        <taxon>Eukaryota</taxon>
        <taxon>Viridiplantae</taxon>
        <taxon>Streptophyta</taxon>
        <taxon>Embryophyta</taxon>
        <taxon>Tracheophyta</taxon>
        <taxon>Spermatophyta</taxon>
        <taxon>Magnoliopsida</taxon>
        <taxon>Liliopsida</taxon>
        <taxon>Poales</taxon>
        <taxon>Poaceae</taxon>
        <taxon>BOP clade</taxon>
        <taxon>Oryzoideae</taxon>
        <taxon>Oryzeae</taxon>
        <taxon>Oryzinae</taxon>
        <taxon>Oryza</taxon>
        <taxon>Oryza sativa</taxon>
    </lineage>
</organism>
<proteinExistence type="inferred from homology"/>
<accession>Q5VS45</accession>
<accession>A0A0P0WSC9</accession>
<sequence length="58" mass="6479">MIYRKWSLLSSTILIWGGAATAGLAGVFLFNAKEKFQKYLSGEGQRLRQQDRAAMGKN</sequence>
<evidence type="ECO:0000250" key="1">
    <source>
        <dbReference type="UniProtKB" id="Q9SKE0"/>
    </source>
</evidence>
<evidence type="ECO:0000305" key="2"/>
<evidence type="ECO:0000312" key="3">
    <source>
        <dbReference type="EMBL" id="BAD67730.1"/>
    </source>
</evidence>
<evidence type="ECO:0000312" key="4">
    <source>
        <dbReference type="EMBL" id="BAH93308.1"/>
    </source>
</evidence>